<protein>
    <recommendedName>
        <fullName evidence="5">Cytochrome P450 monooxygenase pbrB</fullName>
        <ecNumber evidence="7">1.-.-.-</ecNumber>
    </recommendedName>
    <alternativeName>
        <fullName evidence="5">Aspterric acid biosynthesis cluster protein B</fullName>
    </alternativeName>
</protein>
<gene>
    <name evidence="5" type="primary">pbrB</name>
    <name type="ORF">PMG11_09715</name>
</gene>
<keyword id="KW-0349">Heme</keyword>
<keyword id="KW-0408">Iron</keyword>
<keyword id="KW-0472">Membrane</keyword>
<keyword id="KW-0479">Metal-binding</keyword>
<keyword id="KW-0503">Monooxygenase</keyword>
<keyword id="KW-0560">Oxidoreductase</keyword>
<keyword id="KW-1185">Reference proteome</keyword>
<keyword id="KW-0812">Transmembrane</keyword>
<keyword id="KW-1133">Transmembrane helix</keyword>
<feature type="chain" id="PRO_0000462098" description="Cytochrome P450 monooxygenase pbrB">
    <location>
        <begin position="1"/>
        <end position="512"/>
    </location>
</feature>
<feature type="transmembrane region" description="Helical" evidence="3">
    <location>
        <begin position="6"/>
        <end position="29"/>
    </location>
</feature>
<feature type="binding site" description="axial binding residue" evidence="1">
    <location>
        <position position="452"/>
    </location>
    <ligand>
        <name>heme</name>
        <dbReference type="ChEBI" id="CHEBI:30413"/>
    </ligand>
    <ligandPart>
        <name>Fe</name>
        <dbReference type="ChEBI" id="CHEBI:18248"/>
    </ligandPart>
</feature>
<evidence type="ECO:0000250" key="1">
    <source>
        <dbReference type="UniProtKB" id="P04798"/>
    </source>
</evidence>
<evidence type="ECO:0000250" key="2">
    <source>
        <dbReference type="UniProtKB" id="Q0CPG7"/>
    </source>
</evidence>
<evidence type="ECO:0000255" key="3"/>
<evidence type="ECO:0000269" key="4">
    <source>
    </source>
</evidence>
<evidence type="ECO:0000303" key="5">
    <source>
    </source>
</evidence>
<evidence type="ECO:0000305" key="6"/>
<evidence type="ECO:0000305" key="7">
    <source>
    </source>
</evidence>
<dbReference type="EC" id="1.-.-.-" evidence="7"/>
<dbReference type="EMBL" id="CDHK01000010">
    <property type="protein sequence ID" value="CEJ61175.1"/>
    <property type="molecule type" value="Genomic_DNA"/>
</dbReference>
<dbReference type="STRING" id="104259.A0A0F7U0K0"/>
<dbReference type="OrthoDB" id="3184603at2759"/>
<dbReference type="UniPathway" id="UPA00213"/>
<dbReference type="Proteomes" id="UP000042958">
    <property type="component" value="Unassembled WGS sequence"/>
</dbReference>
<dbReference type="GO" id="GO:0016020">
    <property type="term" value="C:membrane"/>
    <property type="evidence" value="ECO:0007669"/>
    <property type="project" value="UniProtKB-SubCell"/>
</dbReference>
<dbReference type="GO" id="GO:0020037">
    <property type="term" value="F:heme binding"/>
    <property type="evidence" value="ECO:0007669"/>
    <property type="project" value="InterPro"/>
</dbReference>
<dbReference type="GO" id="GO:0005506">
    <property type="term" value="F:iron ion binding"/>
    <property type="evidence" value="ECO:0007669"/>
    <property type="project" value="InterPro"/>
</dbReference>
<dbReference type="GO" id="GO:0004497">
    <property type="term" value="F:monooxygenase activity"/>
    <property type="evidence" value="ECO:0007669"/>
    <property type="project" value="UniProtKB-KW"/>
</dbReference>
<dbReference type="GO" id="GO:0016705">
    <property type="term" value="F:oxidoreductase activity, acting on paired donors, with incorporation or reduction of molecular oxygen"/>
    <property type="evidence" value="ECO:0007669"/>
    <property type="project" value="InterPro"/>
</dbReference>
<dbReference type="GO" id="GO:0043386">
    <property type="term" value="P:mycotoxin biosynthetic process"/>
    <property type="evidence" value="ECO:0007669"/>
    <property type="project" value="UniProtKB-ARBA"/>
</dbReference>
<dbReference type="CDD" id="cd11062">
    <property type="entry name" value="CYP58-like"/>
    <property type="match status" value="1"/>
</dbReference>
<dbReference type="Gene3D" id="1.10.630.10">
    <property type="entry name" value="Cytochrome P450"/>
    <property type="match status" value="1"/>
</dbReference>
<dbReference type="InterPro" id="IPR001128">
    <property type="entry name" value="Cyt_P450"/>
</dbReference>
<dbReference type="InterPro" id="IPR017972">
    <property type="entry name" value="Cyt_P450_CS"/>
</dbReference>
<dbReference type="InterPro" id="IPR002401">
    <property type="entry name" value="Cyt_P450_E_grp-I"/>
</dbReference>
<dbReference type="InterPro" id="IPR036396">
    <property type="entry name" value="Cyt_P450_sf"/>
</dbReference>
<dbReference type="InterPro" id="IPR050121">
    <property type="entry name" value="Cytochrome_P450_monoxygenase"/>
</dbReference>
<dbReference type="PANTHER" id="PTHR24305">
    <property type="entry name" value="CYTOCHROME P450"/>
    <property type="match status" value="1"/>
</dbReference>
<dbReference type="PANTHER" id="PTHR24305:SF157">
    <property type="entry name" value="N-ACETYLTRYPTOPHAN 6-HYDROXYLASE IVOC-RELATED"/>
    <property type="match status" value="1"/>
</dbReference>
<dbReference type="Pfam" id="PF00067">
    <property type="entry name" value="p450"/>
    <property type="match status" value="1"/>
</dbReference>
<dbReference type="PRINTS" id="PR00463">
    <property type="entry name" value="EP450I"/>
</dbReference>
<dbReference type="PRINTS" id="PR00385">
    <property type="entry name" value="P450"/>
</dbReference>
<dbReference type="SUPFAM" id="SSF48264">
    <property type="entry name" value="Cytochrome P450"/>
    <property type="match status" value="1"/>
</dbReference>
<dbReference type="PROSITE" id="PS00086">
    <property type="entry name" value="CYTOCHROME_P450"/>
    <property type="match status" value="1"/>
</dbReference>
<proteinExistence type="evidence at protein level"/>
<sequence length="512" mass="57469">MLFQDLSFPAAVGAAFGAFAIYVVARCIYDLFFHPLRNFPGPKRAAIWSFYEFYYDVIKDGTYLWEIEKMHQRYGPIVRINSRSLHIHDPEYFSTIYAGSGRKVNKELSAVSGYTFPHSTISTLEHDLHRKRRAIVNPYFSKRAIADVEPVIHERLDTLISRLAEAKGNTVDLTCAFSAFTADVVTYHFYGSHANYIGSKDFKYGLKDALTVLLNLYNLTRFLPVPPTTIKNLPLPILGLINPNFPLVVSAREANKKMVLNYLDKPDEEKKAMKDARSKSVIVSALADSNVPDEEKTLDRLLDEGETIIFAGIDTTARTLAVALFHLLNNQDVLMKLRKELQTIAKSDGQQWTTTELEAVPYMRGVVQEAIRLAYGLVVRIPRISPHEALQYNGFVIPPGTPVSQSTYLVNNDASVFPNPQVFDPERWVKAAQDGTNLDKYMVSFSKGSRACLGINLAYAKLYLGIARVATSLDMELFETTRADIGVYHTRGFAFPKEGDGSVKARVRGLCK</sequence>
<reference key="1">
    <citation type="journal article" date="2015" name="Genome Announc.">
        <title>Draft genome sequence of the fungus Penicillium brasilianum MG11.</title>
        <authorList>
            <person name="Horn F."/>
            <person name="Linde J."/>
            <person name="Mattern D.J."/>
            <person name="Walther G."/>
            <person name="Guthke R."/>
            <person name="Brakhage A.A."/>
            <person name="Valiante V."/>
        </authorList>
    </citation>
    <scope>NUCLEOTIDE SEQUENCE [LARGE SCALE GENOMIC DNA]</scope>
    <source>
        <strain>MG11</strain>
    </source>
</reference>
<reference key="2">
    <citation type="journal article" date="2024" name="J. Agric. Food Chem.">
        <title>Yeast synthesis and herbicidal activity evaluation of aspterric acid.</title>
        <authorList>
            <person name="Zhou Z."/>
            <person name="Zhang Y."/>
            <person name="Wu Q."/>
            <person name="Hou X."/>
            <person name="Zhang B."/>
        </authorList>
    </citation>
    <scope>FUNCTION</scope>
    <scope>PATHWAY</scope>
    <scope>BIOTECHNOLOGY</scope>
</reference>
<organism>
    <name type="scientific">Penicillium brasilianum</name>
    <dbReference type="NCBI Taxonomy" id="104259"/>
    <lineage>
        <taxon>Eukaryota</taxon>
        <taxon>Fungi</taxon>
        <taxon>Dikarya</taxon>
        <taxon>Ascomycota</taxon>
        <taxon>Pezizomycotina</taxon>
        <taxon>Eurotiomycetes</taxon>
        <taxon>Eurotiomycetidae</taxon>
        <taxon>Eurotiales</taxon>
        <taxon>Aspergillaceae</taxon>
        <taxon>Penicillium</taxon>
    </lineage>
</organism>
<accession>A0A0F7U0K0</accession>
<name>PBRB_PENBI</name>
<comment type="function">
    <text evidence="2 4">Cytochrome P450 monooxygenase; part of the gene cluster that mediates the biosynthesis of the sesquiterpenoid aspterric acid (AA), an inhibitor of dihydroxy-acid dehydratase (DHAD) effective as an herbicide (PubMed:39511739). PbrB catalyzes the second step within the pathway and converts (-)-daucane produced by the terpene cyclase pbrA into an alpha-epoxy carboxylate intermediate which is further converted into the tricyclic aspterric acid by the cytochrome P450 monooxygenase pbrC (By similarity).</text>
</comment>
<comment type="cofactor">
    <cofactor evidence="1">
        <name>heme</name>
        <dbReference type="ChEBI" id="CHEBI:30413"/>
    </cofactor>
</comment>
<comment type="pathway">
    <text evidence="4">Secondary metabolite biosynthesis; terpenoid biosynthesis.</text>
</comment>
<comment type="subcellular location">
    <subcellularLocation>
        <location evidence="3">Membrane</location>
        <topology evidence="3">Single-pass membrane protein</topology>
    </subcellularLocation>
</comment>
<comment type="biotechnology">
    <text evidence="4">The fungal sesquiterpenoid aspterric acid (AA) is a submicromolar inhibitor of dihydroxy-acid dehydratase (DHAD) in plants and is effective as an herbicide in spray applications.</text>
</comment>
<comment type="similarity">
    <text evidence="6">Belongs to the cytochrome P450 family.</text>
</comment>